<protein>
    <recommendedName>
        <fullName evidence="1">ATP synthase subunit delta</fullName>
    </recommendedName>
    <alternativeName>
        <fullName evidence="1">ATP synthase F(1) sector subunit delta</fullName>
    </alternativeName>
    <alternativeName>
        <fullName evidence="1">F-type ATPase subunit delta</fullName>
        <shortName evidence="1">F-ATPase subunit delta</shortName>
    </alternativeName>
</protein>
<evidence type="ECO:0000255" key="1">
    <source>
        <dbReference type="HAMAP-Rule" id="MF_01416"/>
    </source>
</evidence>
<accession>A7MMX2</accession>
<gene>
    <name evidence="1" type="primary">atpH</name>
    <name type="ordered locus">ESA_04009</name>
</gene>
<comment type="function">
    <text evidence="1">F(1)F(0) ATP synthase produces ATP from ADP in the presence of a proton or sodium gradient. F-type ATPases consist of two structural domains, F(1) containing the extramembraneous catalytic core and F(0) containing the membrane proton channel, linked together by a central stalk and a peripheral stalk. During catalysis, ATP synthesis in the catalytic domain of F(1) is coupled via a rotary mechanism of the central stalk subunits to proton translocation.</text>
</comment>
<comment type="function">
    <text evidence="1">This protein is part of the stalk that links CF(0) to CF(1). It either transmits conformational changes from CF(0) to CF(1) or is implicated in proton conduction.</text>
</comment>
<comment type="subunit">
    <text evidence="1">F-type ATPases have 2 components, F(1) - the catalytic core - and F(0) - the membrane proton channel. F(1) has five subunits: alpha(3), beta(3), gamma(1), delta(1), epsilon(1). F(0) has three main subunits: a(1), b(2) and c(10-14). The alpha and beta chains form an alternating ring which encloses part of the gamma chain. F(1) is attached to F(0) by a central stalk formed by the gamma and epsilon chains, while a peripheral stalk is formed by the delta and b chains.</text>
</comment>
<comment type="subcellular location">
    <subcellularLocation>
        <location evidence="1">Cell inner membrane</location>
        <topology evidence="1">Peripheral membrane protein</topology>
    </subcellularLocation>
</comment>
<comment type="similarity">
    <text evidence="1">Belongs to the ATPase delta chain family.</text>
</comment>
<reference key="1">
    <citation type="journal article" date="2010" name="PLoS ONE">
        <title>Genome sequence of Cronobacter sakazakii BAA-894 and comparative genomic hybridization analysis with other Cronobacter species.</title>
        <authorList>
            <person name="Kucerova E."/>
            <person name="Clifton S.W."/>
            <person name="Xia X.Q."/>
            <person name="Long F."/>
            <person name="Porwollik S."/>
            <person name="Fulton L."/>
            <person name="Fronick C."/>
            <person name="Minx P."/>
            <person name="Kyung K."/>
            <person name="Warren W."/>
            <person name="Fulton R."/>
            <person name="Feng D."/>
            <person name="Wollam A."/>
            <person name="Shah N."/>
            <person name="Bhonagiri V."/>
            <person name="Nash W.E."/>
            <person name="Hallsworth-Pepin K."/>
            <person name="Wilson R.K."/>
            <person name="McClelland M."/>
            <person name="Forsythe S.J."/>
        </authorList>
    </citation>
    <scope>NUCLEOTIDE SEQUENCE [LARGE SCALE GENOMIC DNA]</scope>
    <source>
        <strain>ATCC BAA-894</strain>
    </source>
</reference>
<keyword id="KW-0066">ATP synthesis</keyword>
<keyword id="KW-0997">Cell inner membrane</keyword>
<keyword id="KW-1003">Cell membrane</keyword>
<keyword id="KW-0139">CF(1)</keyword>
<keyword id="KW-0375">Hydrogen ion transport</keyword>
<keyword id="KW-0406">Ion transport</keyword>
<keyword id="KW-0472">Membrane</keyword>
<keyword id="KW-1185">Reference proteome</keyword>
<keyword id="KW-0813">Transport</keyword>
<organism>
    <name type="scientific">Cronobacter sakazakii (strain ATCC BAA-894)</name>
    <name type="common">Enterobacter sakazakii</name>
    <dbReference type="NCBI Taxonomy" id="290339"/>
    <lineage>
        <taxon>Bacteria</taxon>
        <taxon>Pseudomonadati</taxon>
        <taxon>Pseudomonadota</taxon>
        <taxon>Gammaproteobacteria</taxon>
        <taxon>Enterobacterales</taxon>
        <taxon>Enterobacteriaceae</taxon>
        <taxon>Cronobacter</taxon>
    </lineage>
</organism>
<dbReference type="EMBL" id="CP000783">
    <property type="protein sequence ID" value="ABU79195.1"/>
    <property type="molecule type" value="Genomic_DNA"/>
</dbReference>
<dbReference type="RefSeq" id="WP_004386170.1">
    <property type="nucleotide sequence ID" value="NC_009778.1"/>
</dbReference>
<dbReference type="SMR" id="A7MMX2"/>
<dbReference type="GeneID" id="56732649"/>
<dbReference type="KEGG" id="esa:ESA_04009"/>
<dbReference type="HOGENOM" id="CLU_085114_3_0_6"/>
<dbReference type="Proteomes" id="UP000000260">
    <property type="component" value="Chromosome"/>
</dbReference>
<dbReference type="GO" id="GO:0005886">
    <property type="term" value="C:plasma membrane"/>
    <property type="evidence" value="ECO:0007669"/>
    <property type="project" value="UniProtKB-SubCell"/>
</dbReference>
<dbReference type="GO" id="GO:0045259">
    <property type="term" value="C:proton-transporting ATP synthase complex"/>
    <property type="evidence" value="ECO:0007669"/>
    <property type="project" value="UniProtKB-KW"/>
</dbReference>
<dbReference type="GO" id="GO:0046933">
    <property type="term" value="F:proton-transporting ATP synthase activity, rotational mechanism"/>
    <property type="evidence" value="ECO:0007669"/>
    <property type="project" value="UniProtKB-UniRule"/>
</dbReference>
<dbReference type="FunFam" id="1.10.520.20:FF:000001">
    <property type="entry name" value="ATP synthase subunit delta"/>
    <property type="match status" value="1"/>
</dbReference>
<dbReference type="Gene3D" id="1.10.520.20">
    <property type="entry name" value="N-terminal domain of the delta subunit of the F1F0-ATP synthase"/>
    <property type="match status" value="1"/>
</dbReference>
<dbReference type="HAMAP" id="MF_01416">
    <property type="entry name" value="ATP_synth_delta_bact"/>
    <property type="match status" value="1"/>
</dbReference>
<dbReference type="InterPro" id="IPR026015">
    <property type="entry name" value="ATP_synth_OSCP/delta_N_sf"/>
</dbReference>
<dbReference type="InterPro" id="IPR020781">
    <property type="entry name" value="ATPase_OSCP/d_CS"/>
</dbReference>
<dbReference type="InterPro" id="IPR000711">
    <property type="entry name" value="ATPase_OSCP/dsu"/>
</dbReference>
<dbReference type="NCBIfam" id="TIGR01145">
    <property type="entry name" value="ATP_synt_delta"/>
    <property type="match status" value="1"/>
</dbReference>
<dbReference type="NCBIfam" id="NF004402">
    <property type="entry name" value="PRK05758.2-2"/>
    <property type="match status" value="1"/>
</dbReference>
<dbReference type="NCBIfam" id="NF004404">
    <property type="entry name" value="PRK05758.2-5"/>
    <property type="match status" value="1"/>
</dbReference>
<dbReference type="PANTHER" id="PTHR11910">
    <property type="entry name" value="ATP SYNTHASE DELTA CHAIN"/>
    <property type="match status" value="1"/>
</dbReference>
<dbReference type="Pfam" id="PF00213">
    <property type="entry name" value="OSCP"/>
    <property type="match status" value="1"/>
</dbReference>
<dbReference type="PRINTS" id="PR00125">
    <property type="entry name" value="ATPASEDELTA"/>
</dbReference>
<dbReference type="SUPFAM" id="SSF47928">
    <property type="entry name" value="N-terminal domain of the delta subunit of the F1F0-ATP synthase"/>
    <property type="match status" value="1"/>
</dbReference>
<dbReference type="PROSITE" id="PS00389">
    <property type="entry name" value="ATPASE_DELTA"/>
    <property type="match status" value="1"/>
</dbReference>
<feature type="chain" id="PRO_0000370970" description="ATP synthase subunit delta">
    <location>
        <begin position="1"/>
        <end position="177"/>
    </location>
</feature>
<name>ATPD_CROS8</name>
<proteinExistence type="inferred from homology"/>
<sequence length="177" mass="19280">MSEFVTVARPYAKAAFDFAVEHQSLDRWQDMLAFAAEVAKNEQMAELLSGALAPETLAESFIAICGDQLDANGQNLIRVMAENGRLKVLPDVLEQFIQLRAALEATVEVEVTSASALSDEQLAKISAAMEKRLSRKVKLNCKIDKSVMAGVIIRSGDTVIDGSVRGRLERLADVLQS</sequence>